<dbReference type="EC" id="4.2.1.17"/>
<dbReference type="EMBL" id="U00010">
    <property type="protein sequence ID" value="AAA17070.1"/>
    <property type="molecule type" value="Genomic_DNA"/>
</dbReference>
<dbReference type="EMBL" id="AL049913">
    <property type="protein sequence ID" value="CAB43147.1"/>
    <property type="molecule type" value="Genomic_DNA"/>
</dbReference>
<dbReference type="EMBL" id="AL583921">
    <property type="protein sequence ID" value="CAC31622.1"/>
    <property type="molecule type" value="Genomic_DNA"/>
</dbReference>
<dbReference type="PIR" id="S72706">
    <property type="entry name" value="S72706"/>
</dbReference>
<dbReference type="RefSeq" id="NP_301896.1">
    <property type="nucleotide sequence ID" value="NC_002677.1"/>
</dbReference>
<dbReference type="RefSeq" id="WP_010908217.1">
    <property type="nucleotide sequence ID" value="NC_002677.1"/>
</dbReference>
<dbReference type="SMR" id="P53526"/>
<dbReference type="STRING" id="272631.gene:17575072"/>
<dbReference type="KEGG" id="mle:ML1241"/>
<dbReference type="PATRIC" id="fig|272631.5.peg.2284"/>
<dbReference type="Leproma" id="ML1241"/>
<dbReference type="eggNOG" id="COG1024">
    <property type="taxonomic scope" value="Bacteria"/>
</dbReference>
<dbReference type="HOGENOM" id="CLU_009834_7_2_11"/>
<dbReference type="OrthoDB" id="9777711at2"/>
<dbReference type="Proteomes" id="UP000000806">
    <property type="component" value="Chromosome"/>
</dbReference>
<dbReference type="GO" id="GO:0004300">
    <property type="term" value="F:enoyl-CoA hydratase activity"/>
    <property type="evidence" value="ECO:0007669"/>
    <property type="project" value="UniProtKB-EC"/>
</dbReference>
<dbReference type="GO" id="GO:0006635">
    <property type="term" value="P:fatty acid beta-oxidation"/>
    <property type="evidence" value="ECO:0007669"/>
    <property type="project" value="TreeGrafter"/>
</dbReference>
<dbReference type="CDD" id="cd06558">
    <property type="entry name" value="crotonase-like"/>
    <property type="match status" value="1"/>
</dbReference>
<dbReference type="Gene3D" id="3.90.226.10">
    <property type="entry name" value="2-enoyl-CoA Hydratase, Chain A, domain 1"/>
    <property type="match status" value="1"/>
</dbReference>
<dbReference type="Gene3D" id="1.10.12.10">
    <property type="entry name" value="Lyase 2-enoyl-coa Hydratase, Chain A, domain 2"/>
    <property type="match status" value="1"/>
</dbReference>
<dbReference type="InterPro" id="IPR029045">
    <property type="entry name" value="ClpP/crotonase-like_dom_sf"/>
</dbReference>
<dbReference type="InterPro" id="IPR018376">
    <property type="entry name" value="Enoyl-CoA_hyd/isom_CS"/>
</dbReference>
<dbReference type="InterPro" id="IPR001753">
    <property type="entry name" value="Enoyl-CoA_hydra/iso"/>
</dbReference>
<dbReference type="InterPro" id="IPR014748">
    <property type="entry name" value="Enoyl-CoA_hydra_C"/>
</dbReference>
<dbReference type="NCBIfam" id="NF004519">
    <property type="entry name" value="PRK05864.1"/>
    <property type="match status" value="1"/>
</dbReference>
<dbReference type="PANTHER" id="PTHR11941:SF130">
    <property type="entry name" value="ENOYL-COA HYDRATASE ECHA12-RELATED"/>
    <property type="match status" value="1"/>
</dbReference>
<dbReference type="PANTHER" id="PTHR11941">
    <property type="entry name" value="ENOYL-COA HYDRATASE-RELATED"/>
    <property type="match status" value="1"/>
</dbReference>
<dbReference type="Pfam" id="PF00378">
    <property type="entry name" value="ECH_1"/>
    <property type="match status" value="1"/>
</dbReference>
<dbReference type="SUPFAM" id="SSF52096">
    <property type="entry name" value="ClpP/crotonase"/>
    <property type="match status" value="1"/>
</dbReference>
<dbReference type="PROSITE" id="PS00166">
    <property type="entry name" value="ENOYL_COA_HYDRATASE"/>
    <property type="match status" value="1"/>
</dbReference>
<proteinExistence type="inferred from homology"/>
<evidence type="ECO:0000250" key="1"/>
<evidence type="ECO:0000305" key="2"/>
<protein>
    <recommendedName>
        <fullName>Probable enoyl-CoA hydratase echA12</fullName>
        <ecNumber>4.2.1.17</ecNumber>
    </recommendedName>
</protein>
<name>ECH12_MYCLE</name>
<feature type="chain" id="PRO_0000109340" description="Probable enoyl-CoA hydratase echA12">
    <location>
        <begin position="1"/>
        <end position="294"/>
    </location>
</feature>
<organism>
    <name type="scientific">Mycobacterium leprae (strain TN)</name>
    <dbReference type="NCBI Taxonomy" id="272631"/>
    <lineage>
        <taxon>Bacteria</taxon>
        <taxon>Bacillati</taxon>
        <taxon>Actinomycetota</taxon>
        <taxon>Actinomycetes</taxon>
        <taxon>Mycobacteriales</taxon>
        <taxon>Mycobacteriaceae</taxon>
        <taxon>Mycobacterium</taxon>
    </lineage>
</organism>
<sequence>MSQTDASCTIAELPYRSVTDLVVLDFPRPEVALITLNRPGRMNSMALDLMKSLKQVLKRITYDHSVRVVVLTGAGRGFCSGADQKFTAPVPQVEGLTQPVRALRAMELLEEVILALRRLHQPVIAAINGPAIGGGLCLALAADVRVASTRAYFRAAGINNGLSASELGLSYLLPRAVGSSRAFEIMLSGRDVGAEEAEQIGLVSYRVSDDRLLDTCYSIAARMATFSRSGTELTKRALWGGLDAASLDKHMQSESLAQLFIALHTSNFEEAAAPCTEKRPTVLVDARGCATSPG</sequence>
<keyword id="KW-0276">Fatty acid metabolism</keyword>
<keyword id="KW-0443">Lipid metabolism</keyword>
<keyword id="KW-0456">Lyase</keyword>
<keyword id="KW-1185">Reference proteome</keyword>
<accession>P53526</accession>
<gene>
    <name type="primary">echA12</name>
    <name type="ordered locus">ML1241</name>
    <name type="ORF">B1170_C2_224</name>
    <name type="ORF">MLCB1610.01</name>
</gene>
<comment type="function">
    <text evidence="1">Could possibly oxidize fatty acids using specific components.</text>
</comment>
<comment type="catalytic activity">
    <reaction>
        <text>a (3S)-3-hydroxyacyl-CoA = a (2E)-enoyl-CoA + H2O</text>
        <dbReference type="Rhea" id="RHEA:16105"/>
        <dbReference type="ChEBI" id="CHEBI:15377"/>
        <dbReference type="ChEBI" id="CHEBI:57318"/>
        <dbReference type="ChEBI" id="CHEBI:58856"/>
        <dbReference type="EC" id="4.2.1.17"/>
    </reaction>
</comment>
<comment type="catalytic activity">
    <reaction>
        <text>a 4-saturated-(3S)-3-hydroxyacyl-CoA = a (3E)-enoyl-CoA + H2O</text>
        <dbReference type="Rhea" id="RHEA:20724"/>
        <dbReference type="ChEBI" id="CHEBI:15377"/>
        <dbReference type="ChEBI" id="CHEBI:58521"/>
        <dbReference type="ChEBI" id="CHEBI:137480"/>
        <dbReference type="EC" id="4.2.1.17"/>
    </reaction>
</comment>
<comment type="similarity">
    <text evidence="2">Belongs to the enoyl-CoA hydratase/isomerase family.</text>
</comment>
<reference key="1">
    <citation type="submission" date="1994-03" db="EMBL/GenBank/DDBJ databases">
        <authorList>
            <person name="Smith D.R."/>
            <person name="Robison K."/>
        </authorList>
    </citation>
    <scope>NUCLEOTIDE SEQUENCE [GENOMIC DNA]</scope>
</reference>
<reference key="2">
    <citation type="journal article" date="2001" name="Nature">
        <title>Massive gene decay in the leprosy bacillus.</title>
        <authorList>
            <person name="Cole S.T."/>
            <person name="Eiglmeier K."/>
            <person name="Parkhill J."/>
            <person name="James K.D."/>
            <person name="Thomson N.R."/>
            <person name="Wheeler P.R."/>
            <person name="Honore N."/>
            <person name="Garnier T."/>
            <person name="Churcher C.M."/>
            <person name="Harris D.E."/>
            <person name="Mungall K.L."/>
            <person name="Basham D."/>
            <person name="Brown D."/>
            <person name="Chillingworth T."/>
            <person name="Connor R."/>
            <person name="Davies R.M."/>
            <person name="Devlin K."/>
            <person name="Duthoy S."/>
            <person name="Feltwell T."/>
            <person name="Fraser A."/>
            <person name="Hamlin N."/>
            <person name="Holroyd S."/>
            <person name="Hornsby T."/>
            <person name="Jagels K."/>
            <person name="Lacroix C."/>
            <person name="Maclean J."/>
            <person name="Moule S."/>
            <person name="Murphy L.D."/>
            <person name="Oliver K."/>
            <person name="Quail M.A."/>
            <person name="Rajandream M.A."/>
            <person name="Rutherford K.M."/>
            <person name="Rutter S."/>
            <person name="Seeger K."/>
            <person name="Simon S."/>
            <person name="Simmonds M."/>
            <person name="Skelton J."/>
            <person name="Squares R."/>
            <person name="Squares S."/>
            <person name="Stevens K."/>
            <person name="Taylor K."/>
            <person name="Whitehead S."/>
            <person name="Woodward J.R."/>
            <person name="Barrell B.G."/>
        </authorList>
    </citation>
    <scope>NUCLEOTIDE SEQUENCE [LARGE SCALE GENOMIC DNA]</scope>
    <source>
        <strain>TN</strain>
    </source>
</reference>